<organism>
    <name type="scientific">Danio rerio</name>
    <name type="common">Zebrafish</name>
    <name type="synonym">Brachydanio rerio</name>
    <dbReference type="NCBI Taxonomy" id="7955"/>
    <lineage>
        <taxon>Eukaryota</taxon>
        <taxon>Metazoa</taxon>
        <taxon>Chordata</taxon>
        <taxon>Craniata</taxon>
        <taxon>Vertebrata</taxon>
        <taxon>Euteleostomi</taxon>
        <taxon>Actinopterygii</taxon>
        <taxon>Neopterygii</taxon>
        <taxon>Teleostei</taxon>
        <taxon>Ostariophysi</taxon>
        <taxon>Cypriniformes</taxon>
        <taxon>Danionidae</taxon>
        <taxon>Danioninae</taxon>
        <taxon>Danio</taxon>
    </lineage>
</organism>
<gene>
    <name type="primary">glt8d1</name>
    <name type="ORF">zgc:103525</name>
</gene>
<accession>Q5U3H3</accession>
<proteinExistence type="evidence at transcript level"/>
<feature type="chain" id="PRO_0000288531" description="Glycosyltransferase 8 domain-containing protein 1">
    <location>
        <begin position="1"/>
        <end position="365"/>
    </location>
</feature>
<feature type="topological domain" description="Cytoplasmic" evidence="1">
    <location>
        <begin position="1"/>
        <end position="4"/>
    </location>
</feature>
<feature type="transmembrane region" description="Helical; Signal-anchor for type II membrane protein" evidence="1">
    <location>
        <begin position="5"/>
        <end position="22"/>
    </location>
</feature>
<feature type="topological domain" description="Lumenal" evidence="1">
    <location>
        <begin position="23"/>
        <end position="365"/>
    </location>
</feature>
<feature type="glycosylation site" description="N-linked (GlcNAc...) asparagine" evidence="1">
    <location>
        <position position="102"/>
    </location>
</feature>
<feature type="glycosylation site" description="N-linked (GlcNAc...) asparagine" evidence="1">
    <location>
        <position position="181"/>
    </location>
</feature>
<feature type="glycosylation site" description="N-linked (GlcNAc...) asparagine" evidence="1">
    <location>
        <position position="245"/>
    </location>
</feature>
<feature type="glycosylation site" description="N-linked (GlcNAc...) asparagine" evidence="1">
    <location>
        <position position="253"/>
    </location>
</feature>
<sequence>MTVRRVNVVILVLLVVAFLIVLHRNLLNLNDFLNQETSDTVPGMILPFETDFLLGRKAMRSGEEIPVLITAPEERLGAAVTAMNSIYRNSKANVVFNIVTLNESVVHLSTWLSKTDLKHKIIVFDPSILLGKIPTDAQKMETVRPLTFARFYMPAFLPDAEKAIYLDDDVIVQGDIRELFNTSLKSGHVAAFSEDCDSASSKGIVRGAGNQNSYIGYLDFKKEAIKKLGMRANTCSFNPGVFVANLTEWKQQNVTSQLEFWMERNAKEDLYSKTLADCMTTPPMLIVFYKHHSNIDPMWNVRHLGATGAGNRYSAQFVKAAKLLHWNGHYKPWGRTSSFSDIWDKWYIPDPTGKFHPIRKHVEEK</sequence>
<dbReference type="EC" id="2.4.1.-"/>
<dbReference type="EMBL" id="BC085543">
    <property type="protein sequence ID" value="AAH85543.1"/>
    <property type="molecule type" value="mRNA"/>
</dbReference>
<dbReference type="RefSeq" id="NP_001007339.1">
    <property type="nucleotide sequence ID" value="NM_001007338.1"/>
</dbReference>
<dbReference type="SMR" id="Q5U3H3"/>
<dbReference type="FunCoup" id="Q5U3H3">
    <property type="interactions" value="257"/>
</dbReference>
<dbReference type="STRING" id="7955.ENSDARP00000058734"/>
<dbReference type="CAZy" id="GT8">
    <property type="family name" value="Glycosyltransferase Family 8"/>
</dbReference>
<dbReference type="GlyCosmos" id="Q5U3H3">
    <property type="glycosylation" value="4 sites, No reported glycans"/>
</dbReference>
<dbReference type="PaxDb" id="7955-ENSDARP00000058734"/>
<dbReference type="GeneID" id="492466"/>
<dbReference type="KEGG" id="dre:492466"/>
<dbReference type="AGR" id="ZFIN:ZDB-GENE-041114-23"/>
<dbReference type="CTD" id="55830"/>
<dbReference type="ZFIN" id="ZDB-GENE-041114-23">
    <property type="gene designation" value="glt8d1"/>
</dbReference>
<dbReference type="eggNOG" id="ENOG502QTN8">
    <property type="taxonomic scope" value="Eukaryota"/>
</dbReference>
<dbReference type="InParanoid" id="Q5U3H3"/>
<dbReference type="OrthoDB" id="411524at2759"/>
<dbReference type="PhylomeDB" id="Q5U3H3"/>
<dbReference type="PRO" id="PR:Q5U3H3"/>
<dbReference type="Proteomes" id="UP000000437">
    <property type="component" value="Chromosome 11"/>
</dbReference>
<dbReference type="GO" id="GO:0005794">
    <property type="term" value="C:Golgi apparatus"/>
    <property type="evidence" value="ECO:0000318"/>
    <property type="project" value="GO_Central"/>
</dbReference>
<dbReference type="GO" id="GO:0016020">
    <property type="term" value="C:membrane"/>
    <property type="evidence" value="ECO:0007669"/>
    <property type="project" value="UniProtKB-SubCell"/>
</dbReference>
<dbReference type="GO" id="GO:0008194">
    <property type="term" value="F:UDP-glycosyltransferase activity"/>
    <property type="evidence" value="ECO:0007669"/>
    <property type="project" value="UniProtKB-ARBA"/>
</dbReference>
<dbReference type="CDD" id="cd06429">
    <property type="entry name" value="GT8_like_1"/>
    <property type="match status" value="1"/>
</dbReference>
<dbReference type="FunFam" id="3.90.550.10:FF:000498">
    <property type="entry name" value="Glycosyltransferase 8 domain-containing protein 1"/>
    <property type="match status" value="1"/>
</dbReference>
<dbReference type="Gene3D" id="3.90.550.10">
    <property type="entry name" value="Spore Coat Polysaccharide Biosynthesis Protein SpsA, Chain A"/>
    <property type="match status" value="1"/>
</dbReference>
<dbReference type="InterPro" id="IPR002495">
    <property type="entry name" value="Glyco_trans_8"/>
</dbReference>
<dbReference type="InterPro" id="IPR050748">
    <property type="entry name" value="Glycosyltrans_8_dom-fam"/>
</dbReference>
<dbReference type="InterPro" id="IPR029044">
    <property type="entry name" value="Nucleotide-diphossugar_trans"/>
</dbReference>
<dbReference type="PANTHER" id="PTHR13778">
    <property type="entry name" value="GLYCOSYLTRANSFERASE 8 DOMAIN-CONTAINING PROTEIN"/>
    <property type="match status" value="1"/>
</dbReference>
<dbReference type="PANTHER" id="PTHR13778:SF3">
    <property type="entry name" value="GLYCOSYLTRANSFERASE 8 DOMAIN-CONTAINING PROTEIN 1"/>
    <property type="match status" value="1"/>
</dbReference>
<dbReference type="Pfam" id="PF01501">
    <property type="entry name" value="Glyco_transf_8"/>
    <property type="match status" value="1"/>
</dbReference>
<dbReference type="SUPFAM" id="SSF53448">
    <property type="entry name" value="Nucleotide-diphospho-sugar transferases"/>
    <property type="match status" value="1"/>
</dbReference>
<comment type="subcellular location">
    <subcellularLocation>
        <location evidence="2">Membrane</location>
        <topology evidence="2">Single-pass type II membrane protein</topology>
    </subcellularLocation>
</comment>
<comment type="similarity">
    <text evidence="2">Belongs to the glycosyltransferase 8 family.</text>
</comment>
<reference key="1">
    <citation type="submission" date="2004-11" db="EMBL/GenBank/DDBJ databases">
        <authorList>
            <consortium name="NIH - Zebrafish Gene Collection (ZGC) project"/>
        </authorList>
    </citation>
    <scope>NUCLEOTIDE SEQUENCE [LARGE SCALE MRNA]</scope>
    <source>
        <tissue>Ovary</tissue>
    </source>
</reference>
<evidence type="ECO:0000255" key="1"/>
<evidence type="ECO:0000305" key="2"/>
<keyword id="KW-0325">Glycoprotein</keyword>
<keyword id="KW-0328">Glycosyltransferase</keyword>
<keyword id="KW-0472">Membrane</keyword>
<keyword id="KW-1185">Reference proteome</keyword>
<keyword id="KW-0735">Signal-anchor</keyword>
<keyword id="KW-0808">Transferase</keyword>
<keyword id="KW-0812">Transmembrane</keyword>
<keyword id="KW-1133">Transmembrane helix</keyword>
<protein>
    <recommendedName>
        <fullName>Glycosyltransferase 8 domain-containing protein 1</fullName>
        <ecNumber>2.4.1.-</ecNumber>
    </recommendedName>
</protein>
<name>GL8D1_DANRE</name>